<keyword id="KW-0095">Blood group antigen</keyword>
<keyword id="KW-1003">Cell membrane</keyword>
<keyword id="KW-1015">Disulfide bond</keyword>
<keyword id="KW-0325">Glycoprotein</keyword>
<keyword id="KW-0328">Glycosyltransferase</keyword>
<keyword id="KW-0336">GPI-anchor</keyword>
<keyword id="KW-0449">Lipoprotein</keyword>
<keyword id="KW-0472">Membrane</keyword>
<keyword id="KW-0520">NAD</keyword>
<keyword id="KW-0521">NADP</keyword>
<keyword id="KW-0548">Nucleotidyltransferase</keyword>
<keyword id="KW-1267">Proteomics identification</keyword>
<keyword id="KW-1185">Reference proteome</keyword>
<keyword id="KW-0732">Signal</keyword>
<keyword id="KW-0808">Transferase</keyword>
<feature type="signal peptide" evidence="2">
    <location>
        <begin position="1"/>
        <end position="46"/>
    </location>
</feature>
<feature type="chain" id="PRO_0000019329" description="Ecto-ADP-ribosyltransferase 4">
    <location>
        <begin position="47"/>
        <end position="285"/>
    </location>
</feature>
<feature type="propeptide" id="PRO_0000019330" description="Removed in mature form" evidence="2">
    <location>
        <begin position="286"/>
        <end position="314"/>
    </location>
</feature>
<feature type="domain" description="TR mART core" evidence="3">
    <location>
        <begin position="91"/>
        <end position="276"/>
    </location>
</feature>
<feature type="binding site" evidence="1">
    <location>
        <position position="126"/>
    </location>
    <ligand>
        <name>NAD(+)</name>
        <dbReference type="ChEBI" id="CHEBI:57540"/>
    </ligand>
</feature>
<feature type="binding site" evidence="1">
    <location>
        <position position="206"/>
    </location>
    <ligand>
        <name>NAD(+)</name>
        <dbReference type="ChEBI" id="CHEBI:57540"/>
    </ligand>
</feature>
<feature type="binding site" evidence="1">
    <location>
        <position position="240"/>
    </location>
    <ligand>
        <name>NAD(+)</name>
        <dbReference type="ChEBI" id="CHEBI:57540"/>
    </ligand>
</feature>
<feature type="lipid moiety-binding region" description="GPI-anchor amidated alanine" evidence="2">
    <location>
        <position position="285"/>
    </location>
</feature>
<feature type="glycosylation site" description="N-linked (GlcNAc...) asparagine" evidence="2">
    <location>
        <position position="114"/>
    </location>
</feature>
<feature type="glycosylation site" description="N-linked (GlcNAc...) asparagine" evidence="2">
    <location>
        <position position="178"/>
    </location>
</feature>
<feature type="glycosylation site" description="N-linked (GlcNAc...) asparagine" evidence="2">
    <location>
        <position position="222"/>
    </location>
</feature>
<feature type="glycosylation site" description="N-linked (GlcNAc...) asparagine" evidence="2">
    <location>
        <position position="257"/>
    </location>
</feature>
<feature type="glycosylation site" description="N-linked (GlcNAc...) asparagine" evidence="2">
    <location>
        <position position="274"/>
    </location>
</feature>
<feature type="disulfide bond" evidence="1">
    <location>
        <begin position="69"/>
        <end position="280"/>
    </location>
</feature>
<feature type="disulfide bond" evidence="1">
    <location>
        <begin position="182"/>
        <end position="231"/>
    </location>
</feature>
<feature type="sequence variant" id="VAR_013707" description="In Dombrock blood group antigens Hy1 and Hy2; dbSNP:rs28362797." evidence="8">
    <original>G</original>
    <variation>V</variation>
    <location>
        <position position="108"/>
    </location>
</feature>
<feature type="sequence variant" id="VAR_013708" description="In Dombrock blood group antigen Jo(a); dbSNP:rs28362798." evidence="8">
    <original>T</original>
    <variation>I</variation>
    <location>
        <position position="117"/>
    </location>
</feature>
<feature type="sequence variant" id="VAR_022266" description="In dbSNP:rs28362799." evidence="8">
    <original>D</original>
    <variation>E</variation>
    <location>
        <position position="135"/>
    </location>
</feature>
<feature type="sequence variant" id="VAR_022267" description="In dbSNP:rs28362800." evidence="8">
    <original>T</original>
    <variation>M</variation>
    <location>
        <position position="189"/>
    </location>
</feature>
<feature type="sequence variant" id="VAR_013709" description="In Dombrock blood group antigen Do(a); dbSNP:rs11276." evidence="4 5 6 7">
    <original>D</original>
    <variation>N</variation>
    <location>
        <position position="265"/>
    </location>
</feature>
<feature type="sequence variant" id="VAR_013710" description="In Dombrock blood group antigen Hy1; dbSNP:rs3088190." evidence="8">
    <original>L</original>
    <variation>V</variation>
    <location>
        <position position="300"/>
    </location>
</feature>
<feature type="sequence conflict" description="In Ref. 6; CAA65095." evidence="9" ref="6">
    <original>E</original>
    <variation>Q</variation>
    <location>
        <position position="48"/>
    </location>
</feature>
<feature type="sequence conflict" description="In Ref. 6; CAA65095." evidence="9" ref="6">
    <original>T</original>
    <variation>S</variation>
    <location>
        <position position="116"/>
    </location>
</feature>
<dbReference type="EC" id="2.4.2.31"/>
<dbReference type="EMBL" id="AF290204">
    <property type="protein sequence ID" value="AAG17845.1"/>
    <property type="molecule type" value="mRNA"/>
</dbReference>
<dbReference type="EMBL" id="AF382213">
    <property type="protein sequence ID" value="AAM21462.1"/>
    <property type="molecule type" value="Genomic_DNA"/>
</dbReference>
<dbReference type="EMBL" id="AF382211">
    <property type="protein sequence ID" value="AAM21462.1"/>
    <property type="status" value="JOINED"/>
    <property type="molecule type" value="Genomic_DNA"/>
</dbReference>
<dbReference type="EMBL" id="AF382212">
    <property type="protein sequence ID" value="AAM21462.1"/>
    <property type="status" value="JOINED"/>
    <property type="molecule type" value="Genomic_DNA"/>
</dbReference>
<dbReference type="EMBL" id="AF382216">
    <property type="protein sequence ID" value="AAM21464.1"/>
    <property type="molecule type" value="Genomic_DNA"/>
</dbReference>
<dbReference type="EMBL" id="AF382214">
    <property type="protein sequence ID" value="AAM21464.1"/>
    <property type="status" value="JOINED"/>
    <property type="molecule type" value="Genomic_DNA"/>
</dbReference>
<dbReference type="EMBL" id="AF382215">
    <property type="protein sequence ID" value="AAM21464.1"/>
    <property type="status" value="JOINED"/>
    <property type="molecule type" value="Genomic_DNA"/>
</dbReference>
<dbReference type="EMBL" id="AF382219">
    <property type="protein sequence ID" value="AAM21465.1"/>
    <property type="molecule type" value="Genomic_DNA"/>
</dbReference>
<dbReference type="EMBL" id="AF382217">
    <property type="protein sequence ID" value="AAM21465.1"/>
    <property type="status" value="JOINED"/>
    <property type="molecule type" value="Genomic_DNA"/>
</dbReference>
<dbReference type="EMBL" id="AF382218">
    <property type="protein sequence ID" value="AAM21465.1"/>
    <property type="status" value="JOINED"/>
    <property type="molecule type" value="Genomic_DNA"/>
</dbReference>
<dbReference type="EMBL" id="AF382222">
    <property type="protein sequence ID" value="AAM21466.1"/>
    <property type="molecule type" value="Genomic_DNA"/>
</dbReference>
<dbReference type="EMBL" id="AF382220">
    <property type="protein sequence ID" value="AAM21466.1"/>
    <property type="status" value="JOINED"/>
    <property type="molecule type" value="Genomic_DNA"/>
</dbReference>
<dbReference type="EMBL" id="AF382221">
    <property type="protein sequence ID" value="AAM21466.1"/>
    <property type="status" value="JOINED"/>
    <property type="molecule type" value="Genomic_DNA"/>
</dbReference>
<dbReference type="EMBL" id="AF382225">
    <property type="protein sequence ID" value="AAM21467.1"/>
    <property type="molecule type" value="Genomic_DNA"/>
</dbReference>
<dbReference type="EMBL" id="AF382223">
    <property type="protein sequence ID" value="AAM21467.1"/>
    <property type="status" value="JOINED"/>
    <property type="molecule type" value="Genomic_DNA"/>
</dbReference>
<dbReference type="EMBL" id="AF382224">
    <property type="protein sequence ID" value="AAM21467.1"/>
    <property type="status" value="JOINED"/>
    <property type="molecule type" value="Genomic_DNA"/>
</dbReference>
<dbReference type="EMBL" id="AY899803">
    <property type="protein sequence ID" value="AAW65375.1"/>
    <property type="molecule type" value="Genomic_DNA"/>
</dbReference>
<dbReference type="EMBL" id="AC007655">
    <property type="status" value="NOT_ANNOTATED_CDS"/>
    <property type="molecule type" value="Genomic_DNA"/>
</dbReference>
<dbReference type="EMBL" id="BC074727">
    <property type="protein sequence ID" value="AAH74727.1"/>
    <property type="molecule type" value="mRNA"/>
</dbReference>
<dbReference type="EMBL" id="X95826">
    <property type="protein sequence ID" value="CAA65095.1"/>
    <property type="molecule type" value="Genomic_DNA"/>
</dbReference>
<dbReference type="EMBL" id="AF340233">
    <property type="protein sequence ID" value="AAK11274.1"/>
    <property type="molecule type" value="Genomic_DNA"/>
</dbReference>
<dbReference type="EMBL" id="AF340234">
    <property type="protein sequence ID" value="AAK11275.1"/>
    <property type="molecule type" value="Genomic_DNA"/>
</dbReference>
<dbReference type="CCDS" id="CCDS8668.1"/>
<dbReference type="RefSeq" id="NP_066549.2">
    <property type="nucleotide sequence ID" value="NM_021071.4"/>
</dbReference>
<dbReference type="SMR" id="Q93070"/>
<dbReference type="BioGRID" id="106913">
    <property type="interactions" value="25"/>
</dbReference>
<dbReference type="FunCoup" id="Q93070">
    <property type="interactions" value="141"/>
</dbReference>
<dbReference type="IntAct" id="Q93070">
    <property type="interactions" value="9"/>
</dbReference>
<dbReference type="STRING" id="9606.ENSP00000228936"/>
<dbReference type="GlyConnect" id="1934">
    <property type="glycosylation" value="17 N-Linked glycans (3 sites)"/>
</dbReference>
<dbReference type="GlyCosmos" id="Q93070">
    <property type="glycosylation" value="5 sites, 17 glycans"/>
</dbReference>
<dbReference type="GlyGen" id="Q93070">
    <property type="glycosylation" value="6 sites, 22 N-linked glycans (3 sites), 1 O-linked glycan (1 site)"/>
</dbReference>
<dbReference type="iPTMnet" id="Q93070"/>
<dbReference type="PhosphoSitePlus" id="Q93070"/>
<dbReference type="BioMuta" id="ART4"/>
<dbReference type="DMDM" id="22261809"/>
<dbReference type="MassIVE" id="Q93070"/>
<dbReference type="PaxDb" id="9606-ENSP00000228936"/>
<dbReference type="PeptideAtlas" id="Q93070"/>
<dbReference type="ProteomicsDB" id="75698"/>
<dbReference type="Antibodypedia" id="23686">
    <property type="antibodies" value="154 antibodies from 22 providers"/>
</dbReference>
<dbReference type="DNASU" id="420"/>
<dbReference type="Ensembl" id="ENST00000228936.6">
    <property type="protein sequence ID" value="ENSP00000228936.4"/>
    <property type="gene ID" value="ENSG00000111339.12"/>
</dbReference>
<dbReference type="GeneID" id="420"/>
<dbReference type="KEGG" id="hsa:420"/>
<dbReference type="MANE-Select" id="ENST00000228936.6">
    <property type="protein sequence ID" value="ENSP00000228936.4"/>
    <property type="RefSeq nucleotide sequence ID" value="NM_021071.4"/>
    <property type="RefSeq protein sequence ID" value="NP_066549.2"/>
</dbReference>
<dbReference type="UCSC" id="uc001rcl.2">
    <property type="organism name" value="human"/>
</dbReference>
<dbReference type="AGR" id="HGNC:726"/>
<dbReference type="CTD" id="420"/>
<dbReference type="DisGeNET" id="420"/>
<dbReference type="GeneCards" id="ART4"/>
<dbReference type="HGNC" id="HGNC:726">
    <property type="gene designation" value="ART4"/>
</dbReference>
<dbReference type="HPA" id="ENSG00000111339">
    <property type="expression patterns" value="Tissue enhanced (liver, lymphoid tissue)"/>
</dbReference>
<dbReference type="MalaCards" id="ART4"/>
<dbReference type="MIM" id="110600">
    <property type="type" value="gene"/>
</dbReference>
<dbReference type="MIM" id="616060">
    <property type="type" value="phenotype"/>
</dbReference>
<dbReference type="neXtProt" id="NX_Q93070"/>
<dbReference type="OpenTargets" id="ENSG00000111339"/>
<dbReference type="PharmGKB" id="PA142672580"/>
<dbReference type="VEuPathDB" id="HostDB:ENSG00000111339"/>
<dbReference type="eggNOG" id="ENOG502SKQR">
    <property type="taxonomic scope" value="Eukaryota"/>
</dbReference>
<dbReference type="GeneTree" id="ENSGT01030000234601"/>
<dbReference type="InParanoid" id="Q93070"/>
<dbReference type="OMA" id="HSFHFKY"/>
<dbReference type="OrthoDB" id="423533at2759"/>
<dbReference type="PAN-GO" id="Q93070">
    <property type="GO annotations" value="2 GO annotations based on evolutionary models"/>
</dbReference>
<dbReference type="PhylomeDB" id="Q93070"/>
<dbReference type="TreeFam" id="TF335356"/>
<dbReference type="PathwayCommons" id="Q93070"/>
<dbReference type="Reactome" id="R-HSA-163125">
    <property type="pathway name" value="Post-translational modification: synthesis of GPI-anchored proteins"/>
</dbReference>
<dbReference type="SignaLink" id="Q93070"/>
<dbReference type="BioGRID-ORCS" id="420">
    <property type="hits" value="10 hits in 1140 CRISPR screens"/>
</dbReference>
<dbReference type="ChiTaRS" id="ART4">
    <property type="organism name" value="human"/>
</dbReference>
<dbReference type="GeneWiki" id="ART4"/>
<dbReference type="GenomeRNAi" id="420"/>
<dbReference type="Pharos" id="Q93070">
    <property type="development level" value="Tbio"/>
</dbReference>
<dbReference type="PRO" id="PR:Q93070"/>
<dbReference type="Proteomes" id="UP000005640">
    <property type="component" value="Chromosome 12"/>
</dbReference>
<dbReference type="RNAct" id="Q93070">
    <property type="molecule type" value="protein"/>
</dbReference>
<dbReference type="Bgee" id="ENSG00000111339">
    <property type="expression patterns" value="Expressed in liver and 111 other cell types or tissues"/>
</dbReference>
<dbReference type="ExpressionAtlas" id="Q93070">
    <property type="expression patterns" value="baseline and differential"/>
</dbReference>
<dbReference type="GO" id="GO:0005576">
    <property type="term" value="C:extracellular region"/>
    <property type="evidence" value="ECO:0000304"/>
    <property type="project" value="Reactome"/>
</dbReference>
<dbReference type="GO" id="GO:0005886">
    <property type="term" value="C:plasma membrane"/>
    <property type="evidence" value="ECO:0000304"/>
    <property type="project" value="Reactome"/>
</dbReference>
<dbReference type="GO" id="GO:0098552">
    <property type="term" value="C:side of membrane"/>
    <property type="evidence" value="ECO:0007669"/>
    <property type="project" value="UniProtKB-KW"/>
</dbReference>
<dbReference type="GO" id="GO:0003950">
    <property type="term" value="F:NAD+ poly-ADP-ribosyltransferase activity"/>
    <property type="evidence" value="ECO:0000318"/>
    <property type="project" value="GO_Central"/>
</dbReference>
<dbReference type="GO" id="GO:0106274">
    <property type="term" value="F:NAD+-protein-arginine ADP-ribosyltransferase activity"/>
    <property type="evidence" value="ECO:0007669"/>
    <property type="project" value="UniProtKB-EC"/>
</dbReference>
<dbReference type="GO" id="GO:0016779">
    <property type="term" value="F:nucleotidyltransferase activity"/>
    <property type="evidence" value="ECO:0007669"/>
    <property type="project" value="UniProtKB-KW"/>
</dbReference>
<dbReference type="GO" id="GO:0006525">
    <property type="term" value="P:arginine metabolic process"/>
    <property type="evidence" value="ECO:0000303"/>
    <property type="project" value="UniProtKB"/>
</dbReference>
<dbReference type="FunFam" id="3.90.176.10:FF:000001">
    <property type="entry name" value="NAD(P)(+)--arginine ADP-ribosyltransferase"/>
    <property type="match status" value="1"/>
</dbReference>
<dbReference type="Gene3D" id="3.90.176.10">
    <property type="entry name" value="Toxin ADP-ribosyltransferase, Chain A, domain 1"/>
    <property type="match status" value="1"/>
</dbReference>
<dbReference type="InterPro" id="IPR050999">
    <property type="entry name" value="ADP-ribosyltransferase_ARG"/>
</dbReference>
<dbReference type="InterPro" id="IPR000768">
    <property type="entry name" value="ART"/>
</dbReference>
<dbReference type="PANTHER" id="PTHR10339">
    <property type="entry name" value="ADP-RIBOSYLTRANSFERASE"/>
    <property type="match status" value="1"/>
</dbReference>
<dbReference type="PANTHER" id="PTHR10339:SF1">
    <property type="entry name" value="ECTO-ADP-RIBOSYLTRANSFERASE 4"/>
    <property type="match status" value="1"/>
</dbReference>
<dbReference type="Pfam" id="PF01129">
    <property type="entry name" value="ART"/>
    <property type="match status" value="1"/>
</dbReference>
<dbReference type="PRINTS" id="PR00970">
    <property type="entry name" value="RIBTRNSFRASE"/>
</dbReference>
<dbReference type="SUPFAM" id="SSF56399">
    <property type="entry name" value="ADP-ribosylation"/>
    <property type="match status" value="1"/>
</dbReference>
<dbReference type="PROSITE" id="PS01291">
    <property type="entry name" value="ART"/>
    <property type="match status" value="1"/>
</dbReference>
<dbReference type="PROSITE" id="PS51996">
    <property type="entry name" value="TR_MART"/>
    <property type="match status" value="1"/>
</dbReference>
<name>NAR4_HUMAN</name>
<comment type="catalytic activity">
    <reaction>
        <text>L-arginyl-[protein] + NAD(+) = N(omega)-(ADP-D-ribosyl)-L-arginyl-[protein] + nicotinamide + H(+)</text>
        <dbReference type="Rhea" id="RHEA:19149"/>
        <dbReference type="Rhea" id="RHEA-COMP:10532"/>
        <dbReference type="Rhea" id="RHEA-COMP:15087"/>
        <dbReference type="ChEBI" id="CHEBI:15378"/>
        <dbReference type="ChEBI" id="CHEBI:17154"/>
        <dbReference type="ChEBI" id="CHEBI:29965"/>
        <dbReference type="ChEBI" id="CHEBI:57540"/>
        <dbReference type="ChEBI" id="CHEBI:142554"/>
        <dbReference type="EC" id="2.4.2.31"/>
    </reaction>
</comment>
<comment type="subcellular location">
    <subcellularLocation>
        <location>Cell membrane</location>
        <topology>Lipid-anchor</topology>
        <topology>GPI-anchor</topology>
    </subcellularLocation>
</comment>
<comment type="tissue specificity">
    <text>Expressed in spleen and T-cells.</text>
</comment>
<comment type="polymorphism">
    <text evidence="5 6">Variations in the ART4 gene are the basis of the Dombrock blood group system (Do). ART4 carries two antithetical antigens (Do(a) and Do(b)) and 3 high-incidence antigens, Gregory (Gy(a)), Holley (Hy), and Joseph (Jo(a)). Do(a) and Do(b) differ by a single variation at position 265, with Asn-265 corresponding to Do(a) and Asp-265 (shown in this entry) to Do(b).</text>
</comment>
<comment type="similarity">
    <text evidence="9">Belongs to the Arg-specific ADP-ribosyltransferase family.</text>
</comment>
<reference key="1">
    <citation type="journal article" date="2000" name="Blood">
        <title>Identification of the Dombrock blood group glycoprotein as a polymorphic member of the ADP-ribosyltransferase gene family.</title>
        <authorList>
            <person name="Gubin A.N."/>
            <person name="Njoroge J.M."/>
            <person name="Wojda U."/>
            <person name="Pack S.D."/>
            <person name="Rios M."/>
            <person name="Reid M.E."/>
            <person name="Miller J.L."/>
        </authorList>
    </citation>
    <scope>NUCLEOTIDE SEQUENCE [MRNA]</scope>
    <scope>POLYMORPHISM</scope>
    <scope>VARIANT ASN-265</scope>
</reference>
<reference key="2">
    <citation type="journal article" date="2002" name="Transfusion">
        <title>Insights into the Holley- and Joseph- phenotypes.</title>
        <authorList>
            <person name="Rios M."/>
            <person name="Hue-Roye K."/>
            <person name="Oyen R."/>
            <person name="Miller J."/>
            <person name="Reid M.E."/>
        </authorList>
    </citation>
    <scope>NUCLEOTIDE SEQUENCE [GENOMIC DNA]</scope>
    <scope>POLYMORPHISM</scope>
    <scope>VARIANTS VAL-108; ILE-117; ASN-265 AND VAL-300</scope>
</reference>
<reference key="3">
    <citation type="submission" date="2005-01" db="EMBL/GenBank/DDBJ databases">
        <authorList>
            <consortium name="SeattleSNPs variation discovery resource"/>
        </authorList>
    </citation>
    <scope>NUCLEOTIDE SEQUENCE [GENOMIC DNA]</scope>
    <scope>VARIANTS VAL-108; ILE-117; GLU-135; MET-189 AND VAL-300</scope>
</reference>
<reference key="4">
    <citation type="journal article" date="2006" name="Nature">
        <title>The finished DNA sequence of human chromosome 12.</title>
        <authorList>
            <person name="Scherer S.E."/>
            <person name="Muzny D.M."/>
            <person name="Buhay C.J."/>
            <person name="Chen R."/>
            <person name="Cree A."/>
            <person name="Ding Y."/>
            <person name="Dugan-Rocha S."/>
            <person name="Gill R."/>
            <person name="Gunaratne P."/>
            <person name="Harris R.A."/>
            <person name="Hawes A.C."/>
            <person name="Hernandez J."/>
            <person name="Hodgson A.V."/>
            <person name="Hume J."/>
            <person name="Jackson A."/>
            <person name="Khan Z.M."/>
            <person name="Kovar-Smith C."/>
            <person name="Lewis L.R."/>
            <person name="Lozado R.J."/>
            <person name="Metzker M.L."/>
            <person name="Milosavljevic A."/>
            <person name="Miner G.R."/>
            <person name="Montgomery K.T."/>
            <person name="Morgan M.B."/>
            <person name="Nazareth L.V."/>
            <person name="Scott G."/>
            <person name="Sodergren E."/>
            <person name="Song X.-Z."/>
            <person name="Steffen D."/>
            <person name="Lovering R.C."/>
            <person name="Wheeler D.A."/>
            <person name="Worley K.C."/>
            <person name="Yuan Y."/>
            <person name="Zhang Z."/>
            <person name="Adams C.Q."/>
            <person name="Ansari-Lari M.A."/>
            <person name="Ayele M."/>
            <person name="Brown M.J."/>
            <person name="Chen G."/>
            <person name="Chen Z."/>
            <person name="Clerc-Blankenburg K.P."/>
            <person name="Davis C."/>
            <person name="Delgado O."/>
            <person name="Dinh H.H."/>
            <person name="Draper H."/>
            <person name="Gonzalez-Garay M.L."/>
            <person name="Havlak P."/>
            <person name="Jackson L.R."/>
            <person name="Jacob L.S."/>
            <person name="Kelly S.H."/>
            <person name="Li L."/>
            <person name="Li Z."/>
            <person name="Liu J."/>
            <person name="Liu W."/>
            <person name="Lu J."/>
            <person name="Maheshwari M."/>
            <person name="Nguyen B.-V."/>
            <person name="Okwuonu G.O."/>
            <person name="Pasternak S."/>
            <person name="Perez L.M."/>
            <person name="Plopper F.J.H."/>
            <person name="Santibanez J."/>
            <person name="Shen H."/>
            <person name="Tabor P.E."/>
            <person name="Verduzco D."/>
            <person name="Waldron L."/>
            <person name="Wang Q."/>
            <person name="Williams G.A."/>
            <person name="Zhang J."/>
            <person name="Zhou J."/>
            <person name="Allen C.C."/>
            <person name="Amin A.G."/>
            <person name="Anyalebechi V."/>
            <person name="Bailey M."/>
            <person name="Barbaria J.A."/>
            <person name="Bimage K.E."/>
            <person name="Bryant N.P."/>
            <person name="Burch P.E."/>
            <person name="Burkett C.E."/>
            <person name="Burrell K.L."/>
            <person name="Calderon E."/>
            <person name="Cardenas V."/>
            <person name="Carter K."/>
            <person name="Casias K."/>
            <person name="Cavazos I."/>
            <person name="Cavazos S.R."/>
            <person name="Ceasar H."/>
            <person name="Chacko J."/>
            <person name="Chan S.N."/>
            <person name="Chavez D."/>
            <person name="Christopoulos C."/>
            <person name="Chu J."/>
            <person name="Cockrell R."/>
            <person name="Cox C.D."/>
            <person name="Dang M."/>
            <person name="Dathorne S.R."/>
            <person name="David R."/>
            <person name="Davis C.M."/>
            <person name="Davy-Carroll L."/>
            <person name="Deshazo D.R."/>
            <person name="Donlin J.E."/>
            <person name="D'Souza L."/>
            <person name="Eaves K.A."/>
            <person name="Egan A."/>
            <person name="Emery-Cohen A.J."/>
            <person name="Escotto M."/>
            <person name="Flagg N."/>
            <person name="Forbes L.D."/>
            <person name="Gabisi A.M."/>
            <person name="Garza M."/>
            <person name="Hamilton C."/>
            <person name="Henderson N."/>
            <person name="Hernandez O."/>
            <person name="Hines S."/>
            <person name="Hogues M.E."/>
            <person name="Huang M."/>
            <person name="Idlebird D.G."/>
            <person name="Johnson R."/>
            <person name="Jolivet A."/>
            <person name="Jones S."/>
            <person name="Kagan R."/>
            <person name="King L.M."/>
            <person name="Leal B."/>
            <person name="Lebow H."/>
            <person name="Lee S."/>
            <person name="LeVan J.M."/>
            <person name="Lewis L.C."/>
            <person name="London P."/>
            <person name="Lorensuhewa L.M."/>
            <person name="Loulseged H."/>
            <person name="Lovett D.A."/>
            <person name="Lucier A."/>
            <person name="Lucier R.L."/>
            <person name="Ma J."/>
            <person name="Madu R.C."/>
            <person name="Mapua P."/>
            <person name="Martindale A.D."/>
            <person name="Martinez E."/>
            <person name="Massey E."/>
            <person name="Mawhiney S."/>
            <person name="Meador M.G."/>
            <person name="Mendez S."/>
            <person name="Mercado C."/>
            <person name="Mercado I.C."/>
            <person name="Merritt C.E."/>
            <person name="Miner Z.L."/>
            <person name="Minja E."/>
            <person name="Mitchell T."/>
            <person name="Mohabbat F."/>
            <person name="Mohabbat K."/>
            <person name="Montgomery B."/>
            <person name="Moore N."/>
            <person name="Morris S."/>
            <person name="Munidasa M."/>
            <person name="Ngo R.N."/>
            <person name="Nguyen N.B."/>
            <person name="Nickerson E."/>
            <person name="Nwaokelemeh O.O."/>
            <person name="Nwokenkwo S."/>
            <person name="Obregon M."/>
            <person name="Oguh M."/>
            <person name="Oragunye N."/>
            <person name="Oviedo R.J."/>
            <person name="Parish B.J."/>
            <person name="Parker D.N."/>
            <person name="Parrish J."/>
            <person name="Parks K.L."/>
            <person name="Paul H.A."/>
            <person name="Payton B.A."/>
            <person name="Perez A."/>
            <person name="Perrin W."/>
            <person name="Pickens A."/>
            <person name="Primus E.L."/>
            <person name="Pu L.-L."/>
            <person name="Puazo M."/>
            <person name="Quiles M.M."/>
            <person name="Quiroz J.B."/>
            <person name="Rabata D."/>
            <person name="Reeves K."/>
            <person name="Ruiz S.J."/>
            <person name="Shao H."/>
            <person name="Sisson I."/>
            <person name="Sonaike T."/>
            <person name="Sorelle R.P."/>
            <person name="Sutton A.E."/>
            <person name="Svatek A.F."/>
            <person name="Svetz L.A."/>
            <person name="Tamerisa K.S."/>
            <person name="Taylor T.R."/>
            <person name="Teague B."/>
            <person name="Thomas N."/>
            <person name="Thorn R.D."/>
            <person name="Trejos Z.Y."/>
            <person name="Trevino B.K."/>
            <person name="Ukegbu O.N."/>
            <person name="Urban J.B."/>
            <person name="Vasquez L.I."/>
            <person name="Vera V.A."/>
            <person name="Villasana D.M."/>
            <person name="Wang L."/>
            <person name="Ward-Moore S."/>
            <person name="Warren J.T."/>
            <person name="Wei X."/>
            <person name="White F."/>
            <person name="Williamson A.L."/>
            <person name="Wleczyk R."/>
            <person name="Wooden H.S."/>
            <person name="Wooden S.H."/>
            <person name="Yen J."/>
            <person name="Yoon L."/>
            <person name="Yoon V."/>
            <person name="Zorrilla S.E."/>
            <person name="Nelson D."/>
            <person name="Kucherlapati R."/>
            <person name="Weinstock G."/>
            <person name="Gibbs R.A."/>
        </authorList>
    </citation>
    <scope>NUCLEOTIDE SEQUENCE [LARGE SCALE GENOMIC DNA]</scope>
</reference>
<reference key="5">
    <citation type="journal article" date="2004" name="Genome Res.">
        <title>The status, quality, and expansion of the NIH full-length cDNA project: the Mammalian Gene Collection (MGC).</title>
        <authorList>
            <consortium name="The MGC Project Team"/>
        </authorList>
    </citation>
    <scope>NUCLEOTIDE SEQUENCE [LARGE SCALE MRNA]</scope>
    <scope>VARIANT ASN-265</scope>
    <source>
        <tissue>Brain</tissue>
    </source>
</reference>
<reference key="6">
    <citation type="journal article" date="1997" name="Genomics">
        <title>Two novel human members of an emerging mammalian gene family related to mono-ADP-ribosylating bacterial toxins.</title>
        <authorList>
            <person name="Koch-Nolte F."/>
            <person name="Haag F."/>
            <person name="Braren R."/>
            <person name="Kuehl M."/>
            <person name="Hoovers J."/>
            <person name="Balasubramanian S."/>
            <person name="Bazan J.F."/>
            <person name="Thiele H.-G."/>
        </authorList>
    </citation>
    <scope>NUCLEOTIDE SEQUENCE [GENOMIC DNA] OF 48-314</scope>
</reference>
<reference key="7">
    <citation type="journal article" date="2001" name="Vox Sang.">
        <title>Polymerase chain reaction with sequence-specific primers-based genotyping of the human Dombrock blood group DO1 and DO2 alleles and the DO gene frequencies in Chinese blood donors.</title>
        <authorList>
            <person name="Wu G.-G."/>
            <person name="Jin S.-Z."/>
            <person name="Deng Z.-H."/>
            <person name="Zhao T.-M."/>
        </authorList>
    </citation>
    <scope>NUCLEOTIDE SEQUENCE [GENOMIC DNA] OF 49-284</scope>
    <scope>POLYMORPHISM</scope>
    <scope>VARIANT ASN-265</scope>
</reference>
<reference key="8">
    <citation type="journal article" date="2010" name="Trends Biochem. Sci.">
        <title>Toward a unified nomenclature for mammalian ADP-ribosyltransferases.</title>
        <authorList>
            <person name="Hottiger M.O."/>
            <person name="Hassa P.O."/>
            <person name="Luscher B."/>
            <person name="Schuler H."/>
            <person name="Koch-Nolte F."/>
        </authorList>
    </citation>
    <scope>NOMENCLATURE</scope>
</reference>
<protein>
    <recommendedName>
        <fullName>Ecto-ADP-ribosyltransferase 4</fullName>
        <ecNumber>2.4.2.31</ecNumber>
    </recommendedName>
    <alternativeName>
        <fullName>ADP-ribosyltransferase C2 and C3 toxin-like 4</fullName>
        <shortName>ARTC4</shortName>
    </alternativeName>
    <alternativeName>
        <fullName>Dombrock blood group carrier molecule</fullName>
    </alternativeName>
    <alternativeName>
        <fullName>Mono(ADP-ribosyl)transferase 4</fullName>
    </alternativeName>
    <alternativeName>
        <fullName>NAD(P)(+)--arginine ADP-ribosyltransferase 4</fullName>
    </alternativeName>
    <cdAntigenName>CD297</cdAntigenName>
</protein>
<proteinExistence type="evidence at protein level"/>
<accession>Q93070</accession>
<accession>Q9BZ50</accession>
<accession>Q9BZ51</accession>
<accession>Q9HB06</accession>
<gene>
    <name type="primary">ART4</name>
    <name type="synonym">DO</name>
    <name type="synonym">DOK1</name>
</gene>
<evidence type="ECO:0000250" key="1"/>
<evidence type="ECO:0000255" key="2"/>
<evidence type="ECO:0000255" key="3">
    <source>
        <dbReference type="PROSITE-ProRule" id="PRU01340"/>
    </source>
</evidence>
<evidence type="ECO:0000269" key="4">
    <source>
    </source>
</evidence>
<evidence type="ECO:0000269" key="5">
    <source>
    </source>
</evidence>
<evidence type="ECO:0000269" key="6">
    <source>
    </source>
</evidence>
<evidence type="ECO:0000269" key="7">
    <source>
    </source>
</evidence>
<evidence type="ECO:0000269" key="8">
    <source ref="3"/>
</evidence>
<evidence type="ECO:0000305" key="9"/>
<organism>
    <name type="scientific">Homo sapiens</name>
    <name type="common">Human</name>
    <dbReference type="NCBI Taxonomy" id="9606"/>
    <lineage>
        <taxon>Eukaryota</taxon>
        <taxon>Metazoa</taxon>
        <taxon>Chordata</taxon>
        <taxon>Craniata</taxon>
        <taxon>Vertebrata</taxon>
        <taxon>Euteleostomi</taxon>
        <taxon>Mammalia</taxon>
        <taxon>Eutheria</taxon>
        <taxon>Euarchontoglires</taxon>
        <taxon>Primates</taxon>
        <taxon>Haplorrhini</taxon>
        <taxon>Catarrhini</taxon>
        <taxon>Hominidae</taxon>
        <taxon>Homo</taxon>
    </lineage>
</organism>
<sequence>MGPLINRCKKILLPTTVPPATMRIWLLGGLLPFLLLLSGLQRPTEGSEVAIKIDFDFAPGSFDDQYQGCSKQVMEKLTQGDYFTKDIEAQKNYFRMWQKAHLAWLNQGKVLPQNMTTTHAVAILFYTLNSNVHSDFTRAMASVARTPQQYERSFHFKYLHYYLTSAIQLLRKDSIMENGTLCYEVHYRTKDVHFNAYTGATIRFGQFLSTSLLKEEAQEFGNQTLFTIFTCLGAPVQYFSLKKEVLIPPYELFKVINMSYHPRGDWLQLRSTGNLSTYNCQLLKASSKKCIPDPIAIASLSFLTSVIIFSKSRV</sequence>